<sequence length="655" mass="69839">MLSVPHLDRDFDYLVPAEHSDDAQPGVRVRVRFHGRLVDGFVLERRSDSDHHGKLGWLDRVVSPEPVLTTEIRRLVDAVAARYAGTRQDVLRLAVPARHARVEREITTAPGRPVVAPVDPSGWAAYGRGRQFLAALADSRAARAVWQALPGELWADRFAEAAAQTVRAGRTVLAIVPDQRDLDTLWQAATALVDEHSVVALSAGLGPEARYRRWLAALRGSARLVIGTRSAVFAPLSELGLVMVWADADDSLAEPRAPYPHAREVAMLRAHQARCAALIGGYARTAEAHALVRSGWAHDVVAPRPEVRARSPRVVALDDSGYDDARDPAARTARLPSIALRAARSALQSGAPVLVQVPRRGYIPSLACGRCRAIARCRSCTGPLSLQGAGSPGAVCRWCGRVDPTLRCVRCGSDVVRAVVVGARRTAEELGRAFPGTAVITSAGDTLVPQLDAGPALVVATPGAEPRAPGGYGAALLLDSWALLGRQDLRAAEDALWRWMTAAALVRPRGAGGVVTVVAESSIPTVQSLIRWDPVGHAEAELAARTEVGLPPSVHIAALDGPAGTVTALLEAARLPDPDRLQADLLGPVDLPPGVRRPAGIPADAPVIRMLLRVCREQGLELAASLRRGIGVLSARQTRQTRSLVRVQIDPLHIG</sequence>
<comment type="function">
    <text evidence="1">Initiates the restart of stalled replication forks, which reloads the replicative helicase on sites other than the origin of replication. Recognizes and binds to abandoned replication forks and remodels them to uncover a helicase loading site. Promotes assembly of the primosome at these replication forks.</text>
</comment>
<comment type="cofactor">
    <cofactor evidence="1">
        <name>Zn(2+)</name>
        <dbReference type="ChEBI" id="CHEBI:29105"/>
    </cofactor>
    <text evidence="1">Binds 2 zinc ions per subunit.</text>
</comment>
<comment type="subunit">
    <text evidence="1">Component of the replication restart primosome.</text>
</comment>
<comment type="similarity">
    <text evidence="1">Belongs to the helicase family. PriA subfamily.</text>
</comment>
<comment type="caution">
    <text evidence="1">As this protein does not have any detectable helicase domains, it probably does not have helicase activity.</text>
</comment>
<keyword id="KW-0067">ATP-binding</keyword>
<keyword id="KW-0235">DNA replication</keyword>
<keyword id="KW-0238">DNA-binding</keyword>
<keyword id="KW-0479">Metal-binding</keyword>
<keyword id="KW-0547">Nucleotide-binding</keyword>
<keyword id="KW-0639">Primosome</keyword>
<keyword id="KW-1185">Reference proteome</keyword>
<keyword id="KW-0862">Zinc</keyword>
<reference key="1">
    <citation type="journal article" date="2003" name="Proc. Natl. Acad. Sci. U.S.A.">
        <title>The complete genome sequence of Mycobacterium bovis.</title>
        <authorList>
            <person name="Garnier T."/>
            <person name="Eiglmeier K."/>
            <person name="Camus J.-C."/>
            <person name="Medina N."/>
            <person name="Mansoor H."/>
            <person name="Pryor M."/>
            <person name="Duthoy S."/>
            <person name="Grondin S."/>
            <person name="Lacroix C."/>
            <person name="Monsempe C."/>
            <person name="Simon S."/>
            <person name="Harris B."/>
            <person name="Atkin R."/>
            <person name="Doggett J."/>
            <person name="Mayes R."/>
            <person name="Keating L."/>
            <person name="Wheeler P.R."/>
            <person name="Parkhill J."/>
            <person name="Barrell B.G."/>
            <person name="Cole S.T."/>
            <person name="Gordon S.V."/>
            <person name="Hewinson R.G."/>
        </authorList>
    </citation>
    <scope>NUCLEOTIDE SEQUENCE [LARGE SCALE GENOMIC DNA]</scope>
    <source>
        <strain>ATCC BAA-935 / AF2122/97</strain>
    </source>
</reference>
<reference key="2">
    <citation type="journal article" date="2017" name="Genome Announc.">
        <title>Updated reference genome sequence and annotation of Mycobacterium bovis AF2122/97.</title>
        <authorList>
            <person name="Malone K.M."/>
            <person name="Farrell D."/>
            <person name="Stuber T.P."/>
            <person name="Schubert O.T."/>
            <person name="Aebersold R."/>
            <person name="Robbe-Austerman S."/>
            <person name="Gordon S.V."/>
        </authorList>
    </citation>
    <scope>NUCLEOTIDE SEQUENCE [LARGE SCALE GENOMIC DNA]</scope>
    <scope>GENOME REANNOTATION</scope>
    <source>
        <strain>ATCC BAA-935 / AF2122/97</strain>
    </source>
</reference>
<proteinExistence type="inferred from homology"/>
<evidence type="ECO:0000255" key="1">
    <source>
        <dbReference type="HAMAP-Rule" id="MF_00983"/>
    </source>
</evidence>
<accession>P0A5A6</accession>
<accession>A0A1R3XYA0</accession>
<accession>P71670</accession>
<accession>X2BI84</accession>
<name>PRIA_MYCBO</name>
<gene>
    <name evidence="1" type="primary">priA</name>
    <name type="ordered locus">BQ2027_MB1437</name>
</gene>
<dbReference type="EMBL" id="LT708304">
    <property type="protein sequence ID" value="SIU00040.1"/>
    <property type="molecule type" value="Genomic_DNA"/>
</dbReference>
<dbReference type="RefSeq" id="NP_855089.1">
    <property type="nucleotide sequence ID" value="NC_002945.3"/>
</dbReference>
<dbReference type="RefSeq" id="WP_003407285.1">
    <property type="nucleotide sequence ID" value="NC_002945.4"/>
</dbReference>
<dbReference type="SMR" id="P0A5A6"/>
<dbReference type="KEGG" id="mbo:BQ2027_MB1437"/>
<dbReference type="PATRIC" id="fig|233413.5.peg.1572"/>
<dbReference type="Proteomes" id="UP000001419">
    <property type="component" value="Chromosome"/>
</dbReference>
<dbReference type="GO" id="GO:1990077">
    <property type="term" value="C:primosome complex"/>
    <property type="evidence" value="ECO:0007669"/>
    <property type="project" value="UniProtKB-UniRule"/>
</dbReference>
<dbReference type="GO" id="GO:0043138">
    <property type="term" value="F:3'-5' DNA helicase activity"/>
    <property type="evidence" value="ECO:0007669"/>
    <property type="project" value="TreeGrafter"/>
</dbReference>
<dbReference type="GO" id="GO:0005524">
    <property type="term" value="F:ATP binding"/>
    <property type="evidence" value="ECO:0007669"/>
    <property type="project" value="UniProtKB-UniRule"/>
</dbReference>
<dbReference type="GO" id="GO:0003677">
    <property type="term" value="F:DNA binding"/>
    <property type="evidence" value="ECO:0007669"/>
    <property type="project" value="UniProtKB-UniRule"/>
</dbReference>
<dbReference type="GO" id="GO:0016787">
    <property type="term" value="F:hydrolase activity"/>
    <property type="evidence" value="ECO:0007669"/>
    <property type="project" value="UniProtKB-KW"/>
</dbReference>
<dbReference type="GO" id="GO:0008270">
    <property type="term" value="F:zinc ion binding"/>
    <property type="evidence" value="ECO:0007669"/>
    <property type="project" value="UniProtKB-UniRule"/>
</dbReference>
<dbReference type="GO" id="GO:0006310">
    <property type="term" value="P:DNA recombination"/>
    <property type="evidence" value="ECO:0007669"/>
    <property type="project" value="InterPro"/>
</dbReference>
<dbReference type="GO" id="GO:0006270">
    <property type="term" value="P:DNA replication initiation"/>
    <property type="evidence" value="ECO:0007669"/>
    <property type="project" value="TreeGrafter"/>
</dbReference>
<dbReference type="GO" id="GO:0006269">
    <property type="term" value="P:DNA replication, synthesis of primer"/>
    <property type="evidence" value="ECO:0007669"/>
    <property type="project" value="UniProtKB-KW"/>
</dbReference>
<dbReference type="GO" id="GO:0006302">
    <property type="term" value="P:double-strand break repair"/>
    <property type="evidence" value="ECO:0007669"/>
    <property type="project" value="InterPro"/>
</dbReference>
<dbReference type="FunFam" id="3.40.1440.60:FF:000002">
    <property type="entry name" value="Primosome assembly protein PriA"/>
    <property type="match status" value="1"/>
</dbReference>
<dbReference type="FunFam" id="3.40.50.300:FF:001817">
    <property type="entry name" value="Primosome assembly protein PriA"/>
    <property type="match status" value="1"/>
</dbReference>
<dbReference type="Gene3D" id="3.40.50.300">
    <property type="entry name" value="P-loop containing nucleotide triphosphate hydrolases"/>
    <property type="match status" value="1"/>
</dbReference>
<dbReference type="Gene3D" id="3.40.1440.60">
    <property type="entry name" value="PriA, 3(prime) DNA-binding domain"/>
    <property type="match status" value="1"/>
</dbReference>
<dbReference type="HAMAP" id="MF_00983">
    <property type="entry name" value="PriA"/>
    <property type="match status" value="1"/>
</dbReference>
<dbReference type="InterPro" id="IPR027417">
    <property type="entry name" value="P-loop_NTPase"/>
</dbReference>
<dbReference type="InterPro" id="IPR005259">
    <property type="entry name" value="PriA"/>
</dbReference>
<dbReference type="InterPro" id="IPR041222">
    <property type="entry name" value="PriA_3primeBD"/>
</dbReference>
<dbReference type="InterPro" id="IPR042115">
    <property type="entry name" value="PriA_3primeBD_sf"/>
</dbReference>
<dbReference type="InterPro" id="IPR050880">
    <property type="entry name" value="PriA_helicase"/>
</dbReference>
<dbReference type="NCBIfam" id="NF011454">
    <property type="entry name" value="PRK14873.1-4"/>
    <property type="match status" value="1"/>
</dbReference>
<dbReference type="PANTHER" id="PTHR30580">
    <property type="entry name" value="PRIMOSOMAL PROTEIN N"/>
    <property type="match status" value="1"/>
</dbReference>
<dbReference type="PANTHER" id="PTHR30580:SF0">
    <property type="entry name" value="PRIMOSOMAL PROTEIN N"/>
    <property type="match status" value="1"/>
</dbReference>
<dbReference type="Pfam" id="PF17764">
    <property type="entry name" value="PriA_3primeBD"/>
    <property type="match status" value="1"/>
</dbReference>
<organism>
    <name type="scientific">Mycobacterium bovis (strain ATCC BAA-935 / AF2122/97)</name>
    <dbReference type="NCBI Taxonomy" id="233413"/>
    <lineage>
        <taxon>Bacteria</taxon>
        <taxon>Bacillati</taxon>
        <taxon>Actinomycetota</taxon>
        <taxon>Actinomycetes</taxon>
        <taxon>Mycobacteriales</taxon>
        <taxon>Mycobacteriaceae</taxon>
        <taxon>Mycobacterium</taxon>
        <taxon>Mycobacterium tuberculosis complex</taxon>
    </lineage>
</organism>
<protein>
    <recommendedName>
        <fullName evidence="1">Probable replication restart protein PriA</fullName>
    </recommendedName>
    <alternativeName>
        <fullName evidence="1">Putative ATP-dependent DNA helicase PriA</fullName>
    </alternativeName>
</protein>
<feature type="chain" id="PRO_0000102127" description="Probable replication restart protein PriA">
    <location>
        <begin position="1"/>
        <end position="655"/>
    </location>
</feature>
<feature type="binding site" evidence="1">
    <location>
        <position position="368"/>
    </location>
    <ligand>
        <name>Zn(2+)</name>
        <dbReference type="ChEBI" id="CHEBI:29105"/>
        <label>1</label>
    </ligand>
</feature>
<feature type="binding site" evidence="1">
    <location>
        <position position="371"/>
    </location>
    <ligand>
        <name>Zn(2+)</name>
        <dbReference type="ChEBI" id="CHEBI:29105"/>
        <label>1</label>
    </ligand>
</feature>
<feature type="binding site" evidence="1">
    <location>
        <position position="377"/>
    </location>
    <ligand>
        <name>Zn(2+)</name>
        <dbReference type="ChEBI" id="CHEBI:29105"/>
        <label>2</label>
    </ligand>
</feature>
<feature type="binding site" evidence="1">
    <location>
        <position position="380"/>
    </location>
    <ligand>
        <name>Zn(2+)</name>
        <dbReference type="ChEBI" id="CHEBI:29105"/>
        <label>2</label>
    </ligand>
</feature>
<feature type="binding site" evidence="1">
    <location>
        <position position="396"/>
    </location>
    <ligand>
        <name>Zn(2+)</name>
        <dbReference type="ChEBI" id="CHEBI:29105"/>
        <label>2</label>
    </ligand>
</feature>
<feature type="binding site" evidence="1">
    <location>
        <position position="399"/>
    </location>
    <ligand>
        <name>Zn(2+)</name>
        <dbReference type="ChEBI" id="CHEBI:29105"/>
        <label>2</label>
    </ligand>
</feature>
<feature type="binding site" evidence="1">
    <location>
        <position position="408"/>
    </location>
    <ligand>
        <name>Zn(2+)</name>
        <dbReference type="ChEBI" id="CHEBI:29105"/>
        <label>1</label>
    </ligand>
</feature>
<feature type="binding site" evidence="1">
    <location>
        <position position="411"/>
    </location>
    <ligand>
        <name>Zn(2+)</name>
        <dbReference type="ChEBI" id="CHEBI:29105"/>
        <label>1</label>
    </ligand>
</feature>